<proteinExistence type="evidence at protein level"/>
<feature type="initiator methionine" description="Removed" evidence="1">
    <location>
        <position position="1"/>
    </location>
</feature>
<feature type="chain" id="PRO_0000109323" description="Cyclohexa-1,5-dienecarbonyl-CoA hydratase">
    <location>
        <begin position="2"/>
        <end position="258"/>
    </location>
</feature>
<protein>
    <recommendedName>
        <fullName>Cyclohexa-1,5-dienecarbonyl-CoA hydratase</fullName>
        <ecNumber>4.2.1.100</ecNumber>
    </recommendedName>
    <alternativeName>
        <fullName>Cyclohexa-1,5-diene-1-carboxyl-CoA hydratase</fullName>
        <shortName>Dienoyl-CoA hydratase</shortName>
    </alternativeName>
</protein>
<name>DCH_THAAR</name>
<accession>O87873</accession>
<evidence type="ECO:0000269" key="1">
    <source>
    </source>
</evidence>
<evidence type="ECO:0000305" key="2"/>
<dbReference type="EC" id="4.2.1.100"/>
<dbReference type="EMBL" id="AJ224959">
    <property type="protein sequence ID" value="CAA12246.1"/>
    <property type="molecule type" value="Genomic_DNA"/>
</dbReference>
<dbReference type="SMR" id="O87873"/>
<dbReference type="KEGG" id="ag:CAA12246"/>
<dbReference type="UniPathway" id="UPA00739"/>
<dbReference type="GO" id="GO:0018823">
    <property type="term" value="F:cyclohexa-1,5-dienecarbonyl-CoA hydratase activity"/>
    <property type="evidence" value="ECO:0007669"/>
    <property type="project" value="UniProtKB-EC"/>
</dbReference>
<dbReference type="GO" id="GO:0006635">
    <property type="term" value="P:fatty acid beta-oxidation"/>
    <property type="evidence" value="ECO:0007669"/>
    <property type="project" value="TreeGrafter"/>
</dbReference>
<dbReference type="CDD" id="cd06558">
    <property type="entry name" value="crotonase-like"/>
    <property type="match status" value="1"/>
</dbReference>
<dbReference type="Gene3D" id="3.90.226.10">
    <property type="entry name" value="2-enoyl-CoA Hydratase, Chain A, domain 1"/>
    <property type="match status" value="1"/>
</dbReference>
<dbReference type="Gene3D" id="1.10.12.10">
    <property type="entry name" value="Lyase 2-enoyl-coa Hydratase, Chain A, domain 2"/>
    <property type="match status" value="1"/>
</dbReference>
<dbReference type="InterPro" id="IPR029045">
    <property type="entry name" value="ClpP/crotonase-like_dom_sf"/>
</dbReference>
<dbReference type="InterPro" id="IPR017602">
    <property type="entry name" value="Dienoyl_CoA_hydratase"/>
</dbReference>
<dbReference type="InterPro" id="IPR001753">
    <property type="entry name" value="Enoyl-CoA_hydra/iso"/>
</dbReference>
<dbReference type="InterPro" id="IPR014748">
    <property type="entry name" value="Enoyl-CoA_hydra_C"/>
</dbReference>
<dbReference type="NCBIfam" id="TIGR03189">
    <property type="entry name" value="dienoyl_CoA_hyt"/>
    <property type="match status" value="1"/>
</dbReference>
<dbReference type="PANTHER" id="PTHR11941:SF54">
    <property type="entry name" value="ENOYL-COA HYDRATASE, MITOCHONDRIAL"/>
    <property type="match status" value="1"/>
</dbReference>
<dbReference type="PANTHER" id="PTHR11941">
    <property type="entry name" value="ENOYL-COA HYDRATASE-RELATED"/>
    <property type="match status" value="1"/>
</dbReference>
<dbReference type="Pfam" id="PF00378">
    <property type="entry name" value="ECH_1"/>
    <property type="match status" value="1"/>
</dbReference>
<dbReference type="SUPFAM" id="SSF52096">
    <property type="entry name" value="ClpP/crotonase"/>
    <property type="match status" value="1"/>
</dbReference>
<keyword id="KW-0058">Aromatic hydrocarbons catabolism</keyword>
<keyword id="KW-0903">Direct protein sequencing</keyword>
<keyword id="KW-0456">Lyase</keyword>
<sequence>MSEASSPLKVWLERDGSLLRLRLARPKANIVDAAMIAAMRQALGEHLQAPALRAVLLDAEGPHFSFGASVDEHMPDQCAQMLKSLHGLVREMLDSPVPILVALRGQCLGGGLEVAAAGNLLFAAPDAKFGQPEIRLGVFAPAASCLLPPRVGQACAEDLLWSGRSIDGAEGHRIGLIDVLAEDPEAAALRWFDEHIARLSASSLRFAVRAARCDSVPRIKQKLDTVEALYLEELMASHDAVEGLKAFLEKRSANWENR</sequence>
<organism>
    <name type="scientific">Thauera aromatica</name>
    <dbReference type="NCBI Taxonomy" id="59405"/>
    <lineage>
        <taxon>Bacteria</taxon>
        <taxon>Pseudomonadati</taxon>
        <taxon>Pseudomonadota</taxon>
        <taxon>Betaproteobacteria</taxon>
        <taxon>Rhodocyclales</taxon>
        <taxon>Zoogloeaceae</taxon>
        <taxon>Thauera</taxon>
    </lineage>
</organism>
<comment type="function">
    <text>Catalyzes the hydration of cyclohexa-1,5-diene-1-carboxyl-CoA.</text>
</comment>
<comment type="catalytic activity">
    <reaction>
        <text>cyclohexa-1,5-diene-1-carbonyl-CoA + H2O = 6-hydroxycyclohex-1-ene-1-carbonyl-CoA</text>
        <dbReference type="Rhea" id="RHEA:21856"/>
        <dbReference type="ChEBI" id="CHEBI:15377"/>
        <dbReference type="ChEBI" id="CHEBI:57361"/>
        <dbReference type="ChEBI" id="CHEBI:57374"/>
        <dbReference type="EC" id="4.2.1.100"/>
    </reaction>
</comment>
<comment type="pathway">
    <text>Aromatic compound metabolism; benzoyl-CoA degradation.</text>
</comment>
<comment type="similarity">
    <text evidence="2">Belongs to the enoyl-CoA hydratase/isomerase family.</text>
</comment>
<reference key="1">
    <citation type="journal article" date="1998" name="Eur. J. Biochem.">
        <title>Genes coding for the benzoyl-CoA pathway of anaerobic aromatic metabolism in the bacterium Thauera aromatica.</title>
        <authorList>
            <person name="Breese K."/>
            <person name="Boll M."/>
            <person name="Alt-Moerbe J."/>
            <person name="Schaegger H."/>
            <person name="Fuchs G."/>
        </authorList>
    </citation>
    <scope>NUCLEOTIDE SEQUENCE [GENOMIC DNA]</scope>
</reference>
<reference key="2">
    <citation type="journal article" date="1998" name="Eur. J. Biochem.">
        <title>Cyclohexa-1,5-diene-1-carbonyl-CoA hydratase, an enzyme involved in anaerobic metabolism of benzoyl-CoA in the denitrifying bacterium Thauera aromatica.</title>
        <authorList>
            <person name="Laempe D."/>
            <person name="Eisenreich W."/>
            <person name="Bacher A."/>
            <person name="Fuchs G."/>
        </authorList>
    </citation>
    <scope>PROTEIN SEQUENCE OF 2-21</scope>
    <scope>CHARACTERIZATION</scope>
</reference>
<gene>
    <name type="primary">dch</name>
</gene>